<gene>
    <name type="primary">nt5dc3</name>
</gene>
<sequence>MTSAVPLLSRWCRATLAARKKLTHKAEPAFCKGIWWQCVRSLAALSNGPETGDMRGYLTSNYKEVKRSINEELVPSVSSSLLNPDAIFANNEMSLEDIEVYGFDYDYTLAFYSKDLHTLIFNTARDLLINEHRYPKEIRSYEYDPNFAIRGLHYDVHKALLMKIDSFHYIQLGTVYRGLNVVPDFYGKSSEGNTLKQFMDIFSLPEMTLLSCVNEYFLKNNIDYEPVHLYKDVKEAIRDVHVKGILYRAVEADIERYICYGERTQAVLSKLANLGKKMFLITNSPSSFVNKGMNFIVGKDWRDLFDVVIVQADKPNFFNDKRRPFRKVAERGILLWDKIHHLEKGQTYKQGNLFEFLKLTGWRGSKVLYFGDHIYSDLADLTLKHGWRTGAIIPELKSEIEIMNTSHYITTVTWLQGLTGLLERMQVYRDAESQMVLQDWIKERQEMRDLARKMFNRQFGSIFRTDHNPTYFLRRLSRFADIYMESLSCLLNYDLHHTFYPKRTPLQHELPVCSEQQNTGTFRIPLGKEMAQIK</sequence>
<reference key="1">
    <citation type="submission" date="2007-03" db="EMBL/GenBank/DDBJ databases">
        <authorList>
            <consortium name="NIH - Xenopus Gene Collection (XGC) project"/>
        </authorList>
    </citation>
    <scope>NUCLEOTIDE SEQUENCE [LARGE SCALE MRNA] (ISOFORM 1)</scope>
    <scope>NUCLEOTIDE SEQUENCE [LARGE SCALE MRNA] OF 13-534 (ISOFORM 2)</scope>
    <source>
        <tissue>Embryo</tissue>
    </source>
</reference>
<dbReference type="EC" id="3.1.3.-"/>
<dbReference type="EMBL" id="BC135684">
    <property type="protein sequence ID" value="AAI35685.1"/>
    <property type="molecule type" value="mRNA"/>
</dbReference>
<dbReference type="EMBL" id="BC157658">
    <property type="protein sequence ID" value="AAI57659.1"/>
    <property type="molecule type" value="mRNA"/>
</dbReference>
<dbReference type="RefSeq" id="NP_001096314.1">
    <molecule id="A4IHT9-1"/>
    <property type="nucleotide sequence ID" value="NM_001102844.1"/>
</dbReference>
<dbReference type="SMR" id="A4IHT9"/>
<dbReference type="FunCoup" id="A4IHT9">
    <property type="interactions" value="172"/>
</dbReference>
<dbReference type="STRING" id="8364.ENSXETP00000004479"/>
<dbReference type="PaxDb" id="8364-ENSXETP00000011758"/>
<dbReference type="DNASU" id="100124894"/>
<dbReference type="GeneID" id="100124894"/>
<dbReference type="KEGG" id="xtr:100124894"/>
<dbReference type="AGR" id="Xenbase:XB-GENE-940463"/>
<dbReference type="CTD" id="51559"/>
<dbReference type="Xenbase" id="XB-GENE-940463">
    <property type="gene designation" value="nt5dc3"/>
</dbReference>
<dbReference type="eggNOG" id="KOG2470">
    <property type="taxonomic scope" value="Eukaryota"/>
</dbReference>
<dbReference type="InParanoid" id="A4IHT9"/>
<dbReference type="OrthoDB" id="409330at2759"/>
<dbReference type="Proteomes" id="UP000008143">
    <property type="component" value="Chromosome 3"/>
</dbReference>
<dbReference type="GO" id="GO:0016787">
    <property type="term" value="F:hydrolase activity"/>
    <property type="evidence" value="ECO:0007669"/>
    <property type="project" value="UniProtKB-KW"/>
</dbReference>
<dbReference type="GO" id="GO:0046872">
    <property type="term" value="F:metal ion binding"/>
    <property type="evidence" value="ECO:0007669"/>
    <property type="project" value="UniProtKB-KW"/>
</dbReference>
<dbReference type="CDD" id="cd07522">
    <property type="entry name" value="HAD_cN-II"/>
    <property type="match status" value="1"/>
</dbReference>
<dbReference type="FunFam" id="3.40.50.1000:FF:000026">
    <property type="entry name" value="NT5DC3 isoform 1"/>
    <property type="match status" value="1"/>
</dbReference>
<dbReference type="Gene3D" id="3.40.50.1000">
    <property type="entry name" value="HAD superfamily/HAD-like"/>
    <property type="match status" value="1"/>
</dbReference>
<dbReference type="InterPro" id="IPR036412">
    <property type="entry name" value="HAD-like_sf"/>
</dbReference>
<dbReference type="InterPro" id="IPR008380">
    <property type="entry name" value="HAD-SF_hydro_IG_5-nucl"/>
</dbReference>
<dbReference type="InterPro" id="IPR023214">
    <property type="entry name" value="HAD_sf"/>
</dbReference>
<dbReference type="InterPro" id="IPR016695">
    <property type="entry name" value="Pur_nucleotidase"/>
</dbReference>
<dbReference type="NCBIfam" id="TIGR02244">
    <property type="entry name" value="HAD-IG-Ncltidse"/>
    <property type="match status" value="1"/>
</dbReference>
<dbReference type="PANTHER" id="PTHR12103">
    <property type="entry name" value="5'-NUCLEOTIDASE DOMAIN-CONTAINING"/>
    <property type="match status" value="1"/>
</dbReference>
<dbReference type="PANTHER" id="PTHR12103:SF11">
    <property type="entry name" value="5'-NUCLEOTIDASE DOMAIN-CONTAINING PROTEIN 3"/>
    <property type="match status" value="1"/>
</dbReference>
<dbReference type="Pfam" id="PF05761">
    <property type="entry name" value="5_nucleotid"/>
    <property type="match status" value="1"/>
</dbReference>
<dbReference type="PIRSF" id="PIRSF017434">
    <property type="entry name" value="Purine_5'-nucleotidase"/>
    <property type="match status" value="1"/>
</dbReference>
<dbReference type="SUPFAM" id="SSF56784">
    <property type="entry name" value="HAD-like"/>
    <property type="match status" value="1"/>
</dbReference>
<keyword id="KW-0025">Alternative splicing</keyword>
<keyword id="KW-0378">Hydrolase</keyword>
<keyword id="KW-0460">Magnesium</keyword>
<keyword id="KW-0479">Metal-binding</keyword>
<keyword id="KW-1185">Reference proteome</keyword>
<comment type="cofactor">
    <cofactor evidence="1">
        <name>Mg(2+)</name>
        <dbReference type="ChEBI" id="CHEBI:18420"/>
    </cofactor>
    <text evidence="1">Binds 1 Mg(2+) ion per subunit.</text>
</comment>
<comment type="alternative products">
    <event type="alternative splicing"/>
    <isoform>
        <id>A4IHT9-1</id>
        <name>1</name>
        <sequence type="displayed"/>
    </isoform>
    <isoform>
        <id>A4IHT9-2</id>
        <name>2</name>
        <sequence type="described" ref="VSP_032645 VSP_032646"/>
    </isoform>
</comment>
<comment type="similarity">
    <text evidence="4">Belongs to the 5'(3')-deoxyribonucleotidase family.</text>
</comment>
<evidence type="ECO:0000250" key="1"/>
<evidence type="ECO:0000255" key="2"/>
<evidence type="ECO:0000303" key="3">
    <source ref="1"/>
</evidence>
<evidence type="ECO:0000305" key="4"/>
<feature type="chain" id="PRO_0000326250" description="5'-nucleotidase domain-containing protein 3">
    <location>
        <begin position="1"/>
        <end position="534"/>
    </location>
</feature>
<feature type="active site" description="Nucleophile" evidence="1">
    <location>
        <position position="104"/>
    </location>
</feature>
<feature type="active site" description="Proton donor" evidence="1">
    <location>
        <position position="106"/>
    </location>
</feature>
<feature type="binding site" evidence="1">
    <location>
        <position position="104"/>
    </location>
    <ligand>
        <name>Mg(2+)</name>
        <dbReference type="ChEBI" id="CHEBI:18420"/>
    </ligand>
</feature>
<feature type="binding site" evidence="1">
    <location>
        <position position="106"/>
    </location>
    <ligand>
        <name>Mg(2+)</name>
        <dbReference type="ChEBI" id="CHEBI:18420"/>
    </ligand>
</feature>
<feature type="binding site" evidence="2">
    <location>
        <begin position="234"/>
        <end position="242"/>
    </location>
    <ligand>
        <name>substrate</name>
    </ligand>
</feature>
<feature type="binding site" evidence="1">
    <location>
        <position position="372"/>
    </location>
    <ligand>
        <name>Mg(2+)</name>
        <dbReference type="ChEBI" id="CHEBI:18420"/>
    </ligand>
</feature>
<feature type="splice variant" id="VSP_032645" description="In isoform 2." evidence="3">
    <location>
        <begin position="33"/>
        <end position="70"/>
    </location>
</feature>
<feature type="splice variant" id="VSP_032646" description="In isoform 2." evidence="3">
    <original>D</original>
    <variation>DSEVIEMYEGSHVPLEQMSD</variation>
    <location>
        <position position="184"/>
    </location>
</feature>
<organism>
    <name type="scientific">Xenopus tropicalis</name>
    <name type="common">Western clawed frog</name>
    <name type="synonym">Silurana tropicalis</name>
    <dbReference type="NCBI Taxonomy" id="8364"/>
    <lineage>
        <taxon>Eukaryota</taxon>
        <taxon>Metazoa</taxon>
        <taxon>Chordata</taxon>
        <taxon>Craniata</taxon>
        <taxon>Vertebrata</taxon>
        <taxon>Euteleostomi</taxon>
        <taxon>Amphibia</taxon>
        <taxon>Batrachia</taxon>
        <taxon>Anura</taxon>
        <taxon>Pipoidea</taxon>
        <taxon>Pipidae</taxon>
        <taxon>Xenopodinae</taxon>
        <taxon>Xenopus</taxon>
        <taxon>Silurana</taxon>
    </lineage>
</organism>
<accession>A4IHT9</accession>
<accession>A9UMH4</accession>
<proteinExistence type="evidence at transcript level"/>
<name>NT5D3_XENTR</name>
<protein>
    <recommendedName>
        <fullName>5'-nucleotidase domain-containing protein 3</fullName>
        <ecNumber>3.1.3.-</ecNumber>
    </recommendedName>
</protein>